<proteinExistence type="inferred from homology"/>
<reference key="1">
    <citation type="journal article" date="2009" name="Proc. Natl. Acad. Sci. U.S.A.">
        <title>The genomic basis of trophic strategy in marine bacteria.</title>
        <authorList>
            <person name="Lauro F.M."/>
            <person name="McDougald D."/>
            <person name="Thomas T."/>
            <person name="Williams T.J."/>
            <person name="Egan S."/>
            <person name="Rice S."/>
            <person name="DeMaere M.Z."/>
            <person name="Ting L."/>
            <person name="Ertan H."/>
            <person name="Johnson J."/>
            <person name="Ferriera S."/>
            <person name="Lapidus A."/>
            <person name="Anderson I."/>
            <person name="Kyrpides N."/>
            <person name="Munk A.C."/>
            <person name="Detter C."/>
            <person name="Han C.S."/>
            <person name="Brown M.V."/>
            <person name="Robb F.T."/>
            <person name="Kjelleberg S."/>
            <person name="Cavicchioli R."/>
        </authorList>
    </citation>
    <scope>NUCLEOTIDE SEQUENCE [LARGE SCALE GENOMIC DNA]</scope>
    <source>
        <strain>DSM 13593 / LMG 18877 / RB2256</strain>
    </source>
</reference>
<name>SECB_SPHAL</name>
<keyword id="KW-0143">Chaperone</keyword>
<keyword id="KW-0963">Cytoplasm</keyword>
<keyword id="KW-0653">Protein transport</keyword>
<keyword id="KW-1185">Reference proteome</keyword>
<keyword id="KW-0811">Translocation</keyword>
<keyword id="KW-0813">Transport</keyword>
<dbReference type="EMBL" id="CP000356">
    <property type="protein sequence ID" value="ABF53726.1"/>
    <property type="molecule type" value="Genomic_DNA"/>
</dbReference>
<dbReference type="RefSeq" id="WP_011542302.1">
    <property type="nucleotide sequence ID" value="NC_008048.1"/>
</dbReference>
<dbReference type="SMR" id="Q1GRJ6"/>
<dbReference type="STRING" id="317655.Sala_2015"/>
<dbReference type="KEGG" id="sal:Sala_2015"/>
<dbReference type="eggNOG" id="COG1952">
    <property type="taxonomic scope" value="Bacteria"/>
</dbReference>
<dbReference type="HOGENOM" id="CLU_111574_0_0_5"/>
<dbReference type="OrthoDB" id="9795145at2"/>
<dbReference type="Proteomes" id="UP000006578">
    <property type="component" value="Chromosome"/>
</dbReference>
<dbReference type="GO" id="GO:0005737">
    <property type="term" value="C:cytoplasm"/>
    <property type="evidence" value="ECO:0007669"/>
    <property type="project" value="UniProtKB-SubCell"/>
</dbReference>
<dbReference type="GO" id="GO:0051082">
    <property type="term" value="F:unfolded protein binding"/>
    <property type="evidence" value="ECO:0007669"/>
    <property type="project" value="InterPro"/>
</dbReference>
<dbReference type="GO" id="GO:0006457">
    <property type="term" value="P:protein folding"/>
    <property type="evidence" value="ECO:0007669"/>
    <property type="project" value="UniProtKB-UniRule"/>
</dbReference>
<dbReference type="GO" id="GO:0051262">
    <property type="term" value="P:protein tetramerization"/>
    <property type="evidence" value="ECO:0007669"/>
    <property type="project" value="InterPro"/>
</dbReference>
<dbReference type="GO" id="GO:0015031">
    <property type="term" value="P:protein transport"/>
    <property type="evidence" value="ECO:0007669"/>
    <property type="project" value="UniProtKB-UniRule"/>
</dbReference>
<dbReference type="Gene3D" id="3.10.420.10">
    <property type="entry name" value="SecB-like"/>
    <property type="match status" value="1"/>
</dbReference>
<dbReference type="HAMAP" id="MF_00821">
    <property type="entry name" value="SecB"/>
    <property type="match status" value="1"/>
</dbReference>
<dbReference type="InterPro" id="IPR003708">
    <property type="entry name" value="SecB"/>
</dbReference>
<dbReference type="InterPro" id="IPR035958">
    <property type="entry name" value="SecB-like_sf"/>
</dbReference>
<dbReference type="NCBIfam" id="NF004392">
    <property type="entry name" value="PRK05751.1-3"/>
    <property type="match status" value="1"/>
</dbReference>
<dbReference type="NCBIfam" id="TIGR00809">
    <property type="entry name" value="secB"/>
    <property type="match status" value="1"/>
</dbReference>
<dbReference type="PANTHER" id="PTHR36918">
    <property type="match status" value="1"/>
</dbReference>
<dbReference type="PANTHER" id="PTHR36918:SF1">
    <property type="entry name" value="PROTEIN-EXPORT PROTEIN SECB"/>
    <property type="match status" value="1"/>
</dbReference>
<dbReference type="Pfam" id="PF02556">
    <property type="entry name" value="SecB"/>
    <property type="match status" value="1"/>
</dbReference>
<dbReference type="PRINTS" id="PR01594">
    <property type="entry name" value="SECBCHAPRONE"/>
</dbReference>
<dbReference type="SUPFAM" id="SSF54611">
    <property type="entry name" value="SecB-like"/>
    <property type="match status" value="1"/>
</dbReference>
<evidence type="ECO:0000255" key="1">
    <source>
        <dbReference type="HAMAP-Rule" id="MF_00821"/>
    </source>
</evidence>
<evidence type="ECO:0000256" key="2">
    <source>
        <dbReference type="SAM" id="MobiDB-lite"/>
    </source>
</evidence>
<comment type="function">
    <text evidence="1">One of the proteins required for the normal export of preproteins out of the cell cytoplasm. It is a molecular chaperone that binds to a subset of precursor proteins, maintaining them in a translocation-competent state. It also specifically binds to its receptor SecA.</text>
</comment>
<comment type="subunit">
    <text evidence="1">Homotetramer, a dimer of dimers. One homotetramer interacts with 1 SecA dimer.</text>
</comment>
<comment type="subcellular location">
    <subcellularLocation>
        <location evidence="1">Cytoplasm</location>
    </subcellularLocation>
</comment>
<comment type="similarity">
    <text evidence="1">Belongs to the SecB family.</text>
</comment>
<gene>
    <name evidence="1" type="primary">secB</name>
    <name type="ordered locus">Sala_2015</name>
</gene>
<organism>
    <name type="scientific">Sphingopyxis alaskensis (strain DSM 13593 / LMG 18877 / RB2256)</name>
    <name type="common">Sphingomonas alaskensis</name>
    <dbReference type="NCBI Taxonomy" id="317655"/>
    <lineage>
        <taxon>Bacteria</taxon>
        <taxon>Pseudomonadati</taxon>
        <taxon>Pseudomonadota</taxon>
        <taxon>Alphaproteobacteria</taxon>
        <taxon>Sphingomonadales</taxon>
        <taxon>Sphingomonadaceae</taxon>
        <taxon>Sphingopyxis</taxon>
    </lineage>
</organism>
<sequence length="172" mass="18522">MADETSADINNPALQPNGEDTSPAIGLISQYVKDLSFENPNAPAVYQWQGAPQVDVQFNIAADSVGDNLYEVLLKIDVTSKTDKGTSFVIELKYAGLFGVRNVPDDQLQPFFLAEAPRILFPFARRVVADAVQDGGFPALLLEPIDFHGLFMQQVQAAQGEQVGDGAPVGQA</sequence>
<protein>
    <recommendedName>
        <fullName evidence="1">Protein-export protein SecB</fullName>
    </recommendedName>
</protein>
<feature type="chain" id="PRO_0000318267" description="Protein-export protein SecB">
    <location>
        <begin position="1"/>
        <end position="172"/>
    </location>
</feature>
<feature type="region of interest" description="Disordered" evidence="2">
    <location>
        <begin position="1"/>
        <end position="22"/>
    </location>
</feature>
<feature type="compositionally biased region" description="Polar residues" evidence="2">
    <location>
        <begin position="7"/>
        <end position="20"/>
    </location>
</feature>
<accession>Q1GRJ6</accession>